<dbReference type="EMBL" id="CP003829">
    <property type="protein sequence ID" value="AFR97408.1"/>
    <property type="molecule type" value="Genomic_DNA"/>
</dbReference>
<dbReference type="RefSeq" id="XP_012052222.1">
    <property type="nucleotide sequence ID" value="XM_012196832.1"/>
</dbReference>
<dbReference type="SMR" id="J9VT48"/>
<dbReference type="GeneID" id="23888187"/>
<dbReference type="KEGG" id="cng:CNAG_04808"/>
<dbReference type="VEuPathDB" id="FungiDB:CNAG_04808"/>
<dbReference type="HOGENOM" id="CLU_378548_0_0_1"/>
<dbReference type="OrthoDB" id="2217at5206"/>
<dbReference type="PHI-base" id="PHI:9692"/>
<dbReference type="Proteomes" id="UP000010091">
    <property type="component" value="Chromosome 10"/>
</dbReference>
<dbReference type="GO" id="GO:0005829">
    <property type="term" value="C:cytosol"/>
    <property type="evidence" value="ECO:0007669"/>
    <property type="project" value="UniProtKB-SubCell"/>
</dbReference>
<dbReference type="GO" id="GO:0003730">
    <property type="term" value="F:mRNA 3'-UTR binding"/>
    <property type="evidence" value="ECO:0007669"/>
    <property type="project" value="TreeGrafter"/>
</dbReference>
<dbReference type="GO" id="GO:0004518">
    <property type="term" value="F:nuclease activity"/>
    <property type="evidence" value="ECO:0007669"/>
    <property type="project" value="InterPro"/>
</dbReference>
<dbReference type="GO" id="GO:0006417">
    <property type="term" value="P:regulation of translation"/>
    <property type="evidence" value="ECO:0007669"/>
    <property type="project" value="UniProtKB-KW"/>
</dbReference>
<dbReference type="CDD" id="cd09902">
    <property type="entry name" value="H3TH_MKT1"/>
    <property type="match status" value="1"/>
</dbReference>
<dbReference type="CDD" id="cd09858">
    <property type="entry name" value="PIN_MKT1"/>
    <property type="match status" value="1"/>
</dbReference>
<dbReference type="FunFam" id="3.40.50.1010:FF:000041">
    <property type="entry name" value="Unplaced genomic scaffold supercont1.259, whole genome shotgun sequence"/>
    <property type="match status" value="1"/>
</dbReference>
<dbReference type="Gene3D" id="3.40.50.1010">
    <property type="entry name" value="5'-nuclease"/>
    <property type="match status" value="1"/>
</dbReference>
<dbReference type="InterPro" id="IPR022039">
    <property type="entry name" value="MKT1_C"/>
</dbReference>
<dbReference type="InterPro" id="IPR037314">
    <property type="entry name" value="MKT1_H3TH"/>
</dbReference>
<dbReference type="InterPro" id="IPR022040">
    <property type="entry name" value="MKT1_N"/>
</dbReference>
<dbReference type="InterPro" id="IPR029060">
    <property type="entry name" value="PIN-like_dom_sf"/>
</dbReference>
<dbReference type="InterPro" id="IPR006084">
    <property type="entry name" value="XPG/Rad2"/>
</dbReference>
<dbReference type="InterPro" id="IPR006085">
    <property type="entry name" value="XPG_DNA_repair_N"/>
</dbReference>
<dbReference type="PANTHER" id="PTHR11081">
    <property type="entry name" value="FLAP ENDONUCLEASE FAMILY MEMBER"/>
    <property type="match status" value="1"/>
</dbReference>
<dbReference type="PANTHER" id="PTHR11081:SF32">
    <property type="entry name" value="POST-TRANSCRIPTIONAL REGULATOR MKT1"/>
    <property type="match status" value="1"/>
</dbReference>
<dbReference type="Pfam" id="PF12246">
    <property type="entry name" value="MKT1_C"/>
    <property type="match status" value="1"/>
</dbReference>
<dbReference type="Pfam" id="PF12247">
    <property type="entry name" value="MKT1_N"/>
    <property type="match status" value="1"/>
</dbReference>
<dbReference type="Pfam" id="PF00752">
    <property type="entry name" value="XPG_N"/>
    <property type="match status" value="1"/>
</dbReference>
<dbReference type="SUPFAM" id="SSF88723">
    <property type="entry name" value="PIN domain-like"/>
    <property type="match status" value="1"/>
</dbReference>
<sequence length="768" mass="86778">MTIRGLDNYLKERKLIQSCPISTLANTRLGIDATHYLNHLLTDPNSREPLVAATGGLPLAIISKIESDLRALERHAIKPVFVFAGLPLASRPPPKGPDIKAERENQIKNEAWALYDEGQAYSAVDKLVQFNNGNFVDQRDLLRSIMRLFRHRYVEFVVAPYLGIAQLAYLLQHPKGYIHAIYSSSECLMWPVERVITSSDWNNNFQFVEKVRILNDLNLTSEQFLDFGILAGSSLSRTIPLPQSEFSIKNIADLVRHHKSGISVCQNVRQEPPYKAQFYTESFWKARLAVKFSLVLTTEGACVPLPTVITPQQQAFTVQDVPGDLEEIFSPRIPDELYFHICRGLVSAQVVGWLTSGMIIEQQPLLETGEYRRFIKDVITEGPTSPRCTTIALLADILHPDWSKRRINVHYYFDPPYAPVRGAFVPFTDALTQSLIGRCSDWMVPMFNLEMELRRQNSSTIDLKLCIGALASEELVHRTFKPKGDRVLDKKDEVVANSLWRFLEVRGFVQQNHAHSLIGKALYAAYTVSRVNDRFQEPIYLILELLRAGVLHGGKWGGPEAAPLLGGPSFGDEDEQNSVRLIMRCISVLPLVSRNQQWVGPLSQELLAFNAFVRGLSKSLRQLFEAVSVHLLLSGDGRRNRDDYSDIMLSLPFQTDVNTGFGILAKSYLDATSYHNQLEPITEEMIGTEGAETAKRQAILFIEENFSSVKAPVQELERGFRFWDAVMVAIRCLAEEQGPNPKLAQTVVGRDVIEQFERADKWLKPMRP</sequence>
<feature type="chain" id="PRO_0000450880" description="Post-transcriptional regulator MKT1">
    <location>
        <begin position="1"/>
        <end position="768"/>
    </location>
</feature>
<gene>
    <name evidence="3" type="primary">MKT1</name>
    <name evidence="5" type="ORF">CNAG_04808</name>
</gene>
<evidence type="ECO:0000250" key="1">
    <source>
        <dbReference type="UniProtKB" id="P40850"/>
    </source>
</evidence>
<evidence type="ECO:0000269" key="2">
    <source>
    </source>
</evidence>
<evidence type="ECO:0000303" key="3">
    <source>
    </source>
</evidence>
<evidence type="ECO:0000305" key="4"/>
<evidence type="ECO:0000312" key="5">
    <source>
        <dbReference type="EMBL" id="AFR97408.1"/>
    </source>
</evidence>
<evidence type="ECO:0000312" key="6">
    <source>
        <dbReference type="Proteomes" id="UP000010091"/>
    </source>
</evidence>
<reference evidence="6" key="1">
    <citation type="journal article" date="2014" name="PLoS Genet.">
        <title>Analysis of the genome and transcriptome of Cryptococcus neoformans var. grubii reveals complex RNA expression and microevolution leading to virulence attenuation.</title>
        <authorList>
            <person name="Janbon G."/>
            <person name="Ormerod K.L."/>
            <person name="Paulet D."/>
            <person name="Byrnes E.J. III"/>
            <person name="Yadav V."/>
            <person name="Chatterjee G."/>
            <person name="Mullapudi N."/>
            <person name="Hon C.-C."/>
            <person name="Billmyre R.B."/>
            <person name="Brunel F."/>
            <person name="Bahn Y.-S."/>
            <person name="Chen W."/>
            <person name="Chen Y."/>
            <person name="Chow E.W.L."/>
            <person name="Coppee J.-Y."/>
            <person name="Floyd-Averette A."/>
            <person name="Gaillardin C."/>
            <person name="Gerik K.J."/>
            <person name="Goldberg J."/>
            <person name="Gonzalez-Hilarion S."/>
            <person name="Gujja S."/>
            <person name="Hamlin J.L."/>
            <person name="Hsueh Y.-P."/>
            <person name="Ianiri G."/>
            <person name="Jones S."/>
            <person name="Kodira C.D."/>
            <person name="Kozubowski L."/>
            <person name="Lam W."/>
            <person name="Marra M."/>
            <person name="Mesner L.D."/>
            <person name="Mieczkowski P.A."/>
            <person name="Moyrand F."/>
            <person name="Nielsen K."/>
            <person name="Proux C."/>
            <person name="Rossignol T."/>
            <person name="Schein J.E."/>
            <person name="Sun S."/>
            <person name="Wollschlaeger C."/>
            <person name="Wood I.A."/>
            <person name="Zeng Q."/>
            <person name="Neuveglise C."/>
            <person name="Newlon C.S."/>
            <person name="Perfect J.R."/>
            <person name="Lodge J.K."/>
            <person name="Idnurm A."/>
            <person name="Stajich J.E."/>
            <person name="Kronstad J.W."/>
            <person name="Sanyal K."/>
            <person name="Heitman J."/>
            <person name="Fraser J.A."/>
            <person name="Cuomo C.A."/>
            <person name="Dietrich F.S."/>
        </authorList>
    </citation>
    <scope>NUCLEOTIDE SEQUENCE [LARGE SCALE GENOMIC DNA]</scope>
    <source>
        <strain>H99 / ATCC 208821 / CBS 10515 / FGSC 9487</strain>
    </source>
</reference>
<reference evidence="4" key="2">
    <citation type="journal article" date="2019" name="Front. Cell. Infect. Microbiol.">
        <title>Pbp1-Interacting Protein Mkt1 Regulates Virulence and Sexual Reproduction in Cryptococcus neoformans.</title>
        <authorList>
            <person name="Son Y.E."/>
            <person name="Fu C."/>
            <person name="Jung W.H."/>
            <person name="Oh S.H."/>
            <person name="Kwak J.H."/>
            <person name="Cardenas M.E."/>
            <person name="Heitman J."/>
            <person name="Park H.S."/>
        </authorList>
    </citation>
    <scope>INTERACTION WITH PBP1</scope>
    <scope>IDENTIFICATION BY MASS SPECTROMETRY</scope>
    <scope>DISRUPTION PHENOTYPE</scope>
</reference>
<proteinExistence type="evidence at protein level"/>
<keyword id="KW-0963">Cytoplasm</keyword>
<keyword id="KW-0810">Translation regulation</keyword>
<protein>
    <recommendedName>
        <fullName evidence="4">Post-transcriptional regulator MKT1</fullName>
    </recommendedName>
    <alternativeName>
        <fullName evidence="4">Inactive endonuclease MKT1</fullName>
    </alternativeName>
</protein>
<comment type="function">
    <text evidence="1">Involved in 3'-UTR mediated RNA regulation (By similarity). Complexes with PBP1 to promote mRNA interactions with poly(A)-binding protein (By similarity).</text>
</comment>
<comment type="subunit">
    <text evidence="2">Interacts with PBP1.</text>
</comment>
<comment type="subcellular location">
    <subcellularLocation>
        <location evidence="1">Cytoplasm</location>
        <location evidence="1">Cytosol</location>
    </subcellularLocation>
</comment>
<comment type="disruption phenotype">
    <text evidence="2">Abnormal sexual reproduction; decreases MFalpha1 expression and abolishes hyphal elongation (PubMed:31681631). Decreases virulence in a mouse intranasal inhalation model for pulmonary infection (PubMed:31681631). Normal vegetative cell population growth at high temperature (PubMed:31681631).</text>
</comment>
<comment type="similarity">
    <text evidence="4">Belongs to the XPG/RAD2 endonuclease family.</text>
</comment>
<comment type="caution">
    <text evidence="4">Although it belongs to the XPG/RAD2 endonuclease family, only one of the seven Asp residues involved in Mg(2+) binding are conserved suggesting that it has no nuclease activity.</text>
</comment>
<organism evidence="6">
    <name type="scientific">Cryptococcus neoformans var. grubii serotype A (strain H99 / ATCC 208821 / CBS 10515 / FGSC 9487)</name>
    <name type="common">Filobasidiella neoformans var. grubii</name>
    <dbReference type="NCBI Taxonomy" id="235443"/>
    <lineage>
        <taxon>Eukaryota</taxon>
        <taxon>Fungi</taxon>
        <taxon>Dikarya</taxon>
        <taxon>Basidiomycota</taxon>
        <taxon>Agaricomycotina</taxon>
        <taxon>Tremellomycetes</taxon>
        <taxon>Tremellales</taxon>
        <taxon>Cryptococcaceae</taxon>
        <taxon>Cryptococcus</taxon>
        <taxon>Cryptococcus neoformans species complex</taxon>
    </lineage>
</organism>
<name>MKT1_CRYNH</name>
<accession>J9VT48</accession>